<evidence type="ECO:0000255" key="1"/>
<accession>Q8ZPD6</accession>
<feature type="signal peptide" evidence="1">
    <location>
        <begin position="1"/>
        <end position="30"/>
    </location>
</feature>
<feature type="chain" id="PRO_0000013841" description="Uncharacterized protein YncE">
    <location>
        <begin position="31"/>
        <end position="353"/>
    </location>
</feature>
<proteinExistence type="inferred from homology"/>
<reference key="1">
    <citation type="journal article" date="2001" name="Nature">
        <title>Complete genome sequence of Salmonella enterica serovar Typhimurium LT2.</title>
        <authorList>
            <person name="McClelland M."/>
            <person name="Sanderson K.E."/>
            <person name="Spieth J."/>
            <person name="Clifton S.W."/>
            <person name="Latreille P."/>
            <person name="Courtney L."/>
            <person name="Porwollik S."/>
            <person name="Ali J."/>
            <person name="Dante M."/>
            <person name="Du F."/>
            <person name="Hou S."/>
            <person name="Layman D."/>
            <person name="Leonard S."/>
            <person name="Nguyen C."/>
            <person name="Scott K."/>
            <person name="Holmes A."/>
            <person name="Grewal N."/>
            <person name="Mulvaney E."/>
            <person name="Ryan E."/>
            <person name="Sun H."/>
            <person name="Florea L."/>
            <person name="Miller W."/>
            <person name="Stoneking T."/>
            <person name="Nhan M."/>
            <person name="Waterston R."/>
            <person name="Wilson R.K."/>
        </authorList>
    </citation>
    <scope>NUCLEOTIDE SEQUENCE [LARGE SCALE GENOMIC DNA]</scope>
    <source>
        <strain>LT2 / SGSC1412 / ATCC 700720</strain>
    </source>
</reference>
<keyword id="KW-1185">Reference proteome</keyword>
<keyword id="KW-0732">Signal</keyword>
<organism>
    <name type="scientific">Salmonella typhimurium (strain LT2 / SGSC1412 / ATCC 700720)</name>
    <dbReference type="NCBI Taxonomy" id="99287"/>
    <lineage>
        <taxon>Bacteria</taxon>
        <taxon>Pseudomonadati</taxon>
        <taxon>Pseudomonadota</taxon>
        <taxon>Gammaproteobacteria</taxon>
        <taxon>Enterobacterales</taxon>
        <taxon>Enterobacteriaceae</taxon>
        <taxon>Salmonella</taxon>
    </lineage>
</organism>
<protein>
    <recommendedName>
        <fullName>Uncharacterized protein YncE</fullName>
    </recommendedName>
</protein>
<sequence>MHLRHLFSPRLRGSLLLGSLLVASSFSTLAAEDMLRKAVGKGAYEMAWSQQENALWLATSQSRKLDKGGVVYRLDPVTLEITQAIHNDLKPFGATINAATQTLWFGNTINSAVTAIDAKTGDVKGRLVLDARKRTEEVRPLQPRELVADAATNTIYISGVGKESAIWVVDGETIKLKTTIENTGKMSTGLALDSKAQRLYTTNADGEFITIDTASNKILSRKKLLDDGKEHFFINLSLDTAGHRAFITDSKATEVLVVDTRNGNILAKIAAPASLAVLFNPTRNEAYVTHRQAGQVSVIDAKTYNVVKTFDTPTYPNSLALSADGKTLYVSVKQKSTREQEATQPDDVIRIAL</sequence>
<dbReference type="EMBL" id="AE006468">
    <property type="protein sequence ID" value="AAL20504.1"/>
    <property type="molecule type" value="Genomic_DNA"/>
</dbReference>
<dbReference type="RefSeq" id="NP_460545.1">
    <property type="nucleotide sequence ID" value="NC_003197.2"/>
</dbReference>
<dbReference type="RefSeq" id="WP_000550636.1">
    <property type="nucleotide sequence ID" value="NC_003197.2"/>
</dbReference>
<dbReference type="SMR" id="Q8ZPD6"/>
<dbReference type="STRING" id="99287.STM1586"/>
<dbReference type="PaxDb" id="99287-STM1586"/>
<dbReference type="GeneID" id="1253104"/>
<dbReference type="KEGG" id="stm:STM1586"/>
<dbReference type="PATRIC" id="fig|99287.12.peg.1677"/>
<dbReference type="HOGENOM" id="CLU_056358_1_0_6"/>
<dbReference type="OMA" id="QDDGKEH"/>
<dbReference type="PhylomeDB" id="Q8ZPD6"/>
<dbReference type="BioCyc" id="SENT99287:STM1586-MONOMER"/>
<dbReference type="Proteomes" id="UP000001014">
    <property type="component" value="Chromosome"/>
</dbReference>
<dbReference type="Gene3D" id="2.130.10.10">
    <property type="entry name" value="YVTN repeat-like/Quinoprotein amine dehydrogenase"/>
    <property type="match status" value="1"/>
</dbReference>
<dbReference type="InterPro" id="IPR011048">
    <property type="entry name" value="Haem_d1_sf"/>
</dbReference>
<dbReference type="InterPro" id="IPR051200">
    <property type="entry name" value="Host-pathogen_enzymatic-act"/>
</dbReference>
<dbReference type="InterPro" id="IPR015943">
    <property type="entry name" value="WD40/YVTN_repeat-like_dom_sf"/>
</dbReference>
<dbReference type="InterPro" id="IPR048433">
    <property type="entry name" value="YNCE-like_beta-prop"/>
</dbReference>
<dbReference type="PANTHER" id="PTHR47197:SF3">
    <property type="entry name" value="DIHYDRO-HEME D1 DEHYDROGENASE"/>
    <property type="match status" value="1"/>
</dbReference>
<dbReference type="PANTHER" id="PTHR47197">
    <property type="entry name" value="PROTEIN NIRF"/>
    <property type="match status" value="1"/>
</dbReference>
<dbReference type="Pfam" id="PF21783">
    <property type="entry name" value="YNCE"/>
    <property type="match status" value="1"/>
</dbReference>
<dbReference type="SUPFAM" id="SSF51004">
    <property type="entry name" value="C-terminal (heme d1) domain of cytochrome cd1-nitrite reductase"/>
    <property type="match status" value="1"/>
</dbReference>
<gene>
    <name type="primary">yncE</name>
    <name type="ordered locus">STM1586</name>
</gene>
<name>YNCE_SALTY</name>